<keyword id="KW-1015">Disulfide bond</keyword>
<keyword id="KW-0472">Membrane</keyword>
<keyword id="KW-0539">Nucleus</keyword>
<keyword id="KW-1185">Reference proteome</keyword>
<keyword id="KW-0812">Transmembrane</keyword>
<keyword id="KW-1133">Transmembrane helix</keyword>
<accession>Q5M844</accession>
<comment type="function">
    <text evidence="1">As a component of the LINC (LInker of Nucleoskeleton and Cytoskeleton) complex, involved in the connection between the nuclear lamina and the cytoskeleton. The nucleocytoplasmic interactions established by the LINC complex play an important role in the transmission of mechanical forces across the nuclear envelope and in nuclear movement and positioning. Behaves as a kinesin cargo, providing a functional binding site for kinesin-1 at the nuclear envelope. Hence may contribute to the establishment of secretory epithelial morphology, by promoting kinesin-dependent apical migration of the centrosome and Golgi apparatus and basal localization of the nucleus (By similarity).</text>
</comment>
<comment type="subunit">
    <text evidence="1">Core component of LINC complexes which are composed of inner nuclear membrane SUN domain-containing proteins coupled to outer nuclear membrane KASH domain-containing nesprins. SUN and KASH domain-containing proteins seem to bind each other promiscuously; however, differentially expression of LINC complex constituents can give rise to specific assemblies. Probably part of a SUN1-containing LINC complex. Interacts with kinesins KIF5B and KLC1 (By similarity).</text>
</comment>
<comment type="subcellular location">
    <subcellularLocation>
        <location evidence="1">Nucleus outer membrane</location>
        <topology evidence="1">Single-pass type IV membrane protein</topology>
    </subcellularLocation>
    <text evidence="1">Localization at the nucleus outer membrane location requires the presence of SUN1.</text>
</comment>
<comment type="domain">
    <text evidence="1">The KASH domain, which contains a transmembrane domain, mediates the nuclear envelope targeting and is involved in the binding to SUN1 and SUN2 through recognition of their SUN domains.</text>
</comment>
<comment type="similarity">
    <text evidence="5">Belongs to the nesprin family.</text>
</comment>
<feature type="chain" id="PRO_0000306266" description="Nesprin-4">
    <location>
        <begin position="1"/>
        <end position="340"/>
    </location>
</feature>
<feature type="topological domain" description="Cytoplasmic" evidence="3">
    <location>
        <begin position="1"/>
        <end position="291"/>
    </location>
</feature>
<feature type="transmembrane region" description="Helical; Anchor for type IV membrane protein" evidence="3">
    <location>
        <begin position="292"/>
        <end position="312"/>
    </location>
</feature>
<feature type="topological domain" description="Perinuclear space" evidence="3">
    <location>
        <begin position="313"/>
        <end position="340"/>
    </location>
</feature>
<feature type="domain" description="KASH" evidence="3">
    <location>
        <begin position="283"/>
        <end position="340"/>
    </location>
</feature>
<feature type="region of interest" description="Disordered" evidence="4">
    <location>
        <begin position="1"/>
        <end position="86"/>
    </location>
</feature>
<feature type="region of interest" description="Disordered" evidence="4">
    <location>
        <begin position="254"/>
        <end position="277"/>
    </location>
</feature>
<feature type="compositionally biased region" description="Basic and acidic residues" evidence="4">
    <location>
        <begin position="53"/>
        <end position="63"/>
    </location>
</feature>
<feature type="disulfide bond" description="Interchain (with SUN1)" evidence="2">
    <location>
        <position position="317"/>
    </location>
</feature>
<feature type="disulfide bond" description="Interchain (with SUN2); alternate" evidence="2">
    <location>
        <position position="317"/>
    </location>
</feature>
<proteinExistence type="evidence at transcript level"/>
<organism>
    <name type="scientific">Rattus norvegicus</name>
    <name type="common">Rat</name>
    <dbReference type="NCBI Taxonomy" id="10116"/>
    <lineage>
        <taxon>Eukaryota</taxon>
        <taxon>Metazoa</taxon>
        <taxon>Chordata</taxon>
        <taxon>Craniata</taxon>
        <taxon>Vertebrata</taxon>
        <taxon>Euteleostomi</taxon>
        <taxon>Mammalia</taxon>
        <taxon>Eutheria</taxon>
        <taxon>Euarchontoglires</taxon>
        <taxon>Glires</taxon>
        <taxon>Rodentia</taxon>
        <taxon>Myomorpha</taxon>
        <taxon>Muroidea</taxon>
        <taxon>Muridae</taxon>
        <taxon>Murinae</taxon>
        <taxon>Rattus</taxon>
    </lineage>
</organism>
<sequence length="340" mass="36515">MAQFPLLGHGFPPEPVNHPLGGPRGLDVAGPTICPAPEEEPSRPEQVQASLDAPEHFMDEPKSTESATSPSKLPLASSHEHQDGGKPCEALQAELQGAAERVDALLVFGEGLAERSEPRAWTSLEQVLRALGTHRDTIFQRLWQLQAQLISYSLVLEKANLLDQDLEVEGDSDGPAAGGVWGPWAPSIFPTPAELEWDPAGDVGGLGPSGQKISRIPGAPCELCGYRGSQSSGQGFEDLLSLGLGHRKHLAAHHRRRLQKPQDKKRQGPPSLPDAMLEVDRGVPAPASRRPLTFLLLLLFLLLVGATLLLPLSGVPCCSHTRLARTPYLVLSYVNGLPPI</sequence>
<dbReference type="EMBL" id="BC088237">
    <property type="protein sequence ID" value="AAH88237.1"/>
    <property type="molecule type" value="mRNA"/>
</dbReference>
<dbReference type="RefSeq" id="NP_001009283.1">
    <property type="nucleotide sequence ID" value="NM_001009283.2"/>
</dbReference>
<dbReference type="RefSeq" id="XP_017443924.1">
    <property type="nucleotide sequence ID" value="XM_017588435.1"/>
</dbReference>
<dbReference type="FunCoup" id="Q5M844">
    <property type="interactions" value="93"/>
</dbReference>
<dbReference type="STRING" id="10116.ENSRNOP00000028265"/>
<dbReference type="GlyGen" id="Q5M844">
    <property type="glycosylation" value="1 site"/>
</dbReference>
<dbReference type="PhosphoSitePlus" id="Q5M844"/>
<dbReference type="PaxDb" id="10116-ENSRNOP00000028265"/>
<dbReference type="Ensembl" id="ENSRNOT00000051422.4">
    <property type="protein sequence ID" value="ENSRNOP00000044396.2"/>
    <property type="gene ID" value="ENSRNOG00000049277.2"/>
</dbReference>
<dbReference type="GeneID" id="292781"/>
<dbReference type="KEGG" id="rno:292781"/>
<dbReference type="UCSC" id="RGD:1304580">
    <property type="organism name" value="rat"/>
</dbReference>
<dbReference type="AGR" id="RGD:1304580"/>
<dbReference type="CTD" id="163183"/>
<dbReference type="RGD" id="1304580">
    <property type="gene designation" value="Syne4"/>
</dbReference>
<dbReference type="eggNOG" id="ENOG502SZGW">
    <property type="taxonomic scope" value="Eukaryota"/>
</dbReference>
<dbReference type="GeneTree" id="ENSGT00510000049061"/>
<dbReference type="HOGENOM" id="CLU_034166_1_0_1"/>
<dbReference type="InParanoid" id="Q5M844"/>
<dbReference type="PRO" id="PR:Q5M844"/>
<dbReference type="Proteomes" id="UP000002494">
    <property type="component" value="Chromosome 1"/>
</dbReference>
<dbReference type="Bgee" id="ENSRNOG00000020830">
    <property type="expression patterns" value="Expressed in pancreas and 19 other cell types or tissues"/>
</dbReference>
<dbReference type="ExpressionAtlas" id="Q5M844">
    <property type="expression patterns" value="baseline"/>
</dbReference>
<dbReference type="GO" id="GO:0034993">
    <property type="term" value="C:meiotic nuclear membrane microtubule tethering complex"/>
    <property type="evidence" value="ECO:0007669"/>
    <property type="project" value="InterPro"/>
</dbReference>
<dbReference type="GO" id="GO:0005640">
    <property type="term" value="C:nuclear outer membrane"/>
    <property type="evidence" value="ECO:0000250"/>
    <property type="project" value="UniProtKB"/>
</dbReference>
<dbReference type="GO" id="GO:0045198">
    <property type="term" value="P:establishment of epithelial cell apical/basal polarity"/>
    <property type="evidence" value="ECO:0000250"/>
    <property type="project" value="UniProtKB"/>
</dbReference>
<dbReference type="InterPro" id="IPR012315">
    <property type="entry name" value="KASH"/>
</dbReference>
<dbReference type="InterPro" id="IPR030268">
    <property type="entry name" value="SYNE4"/>
</dbReference>
<dbReference type="PANTHER" id="PTHR21640">
    <property type="match status" value="1"/>
</dbReference>
<dbReference type="PANTHER" id="PTHR21640:SF1">
    <property type="entry name" value="NESPRIN-4"/>
    <property type="match status" value="1"/>
</dbReference>
<dbReference type="Pfam" id="PF10541">
    <property type="entry name" value="KASH"/>
    <property type="match status" value="1"/>
</dbReference>
<dbReference type="SMART" id="SM01249">
    <property type="entry name" value="KASH"/>
    <property type="match status" value="1"/>
</dbReference>
<dbReference type="SUPFAM" id="SSF46966">
    <property type="entry name" value="Spectrin repeat"/>
    <property type="match status" value="1"/>
</dbReference>
<dbReference type="PROSITE" id="PS51049">
    <property type="entry name" value="KASH"/>
    <property type="match status" value="1"/>
</dbReference>
<gene>
    <name type="primary">Syne4</name>
</gene>
<name>SYNE4_RAT</name>
<reference key="1">
    <citation type="journal article" date="2004" name="Genome Res.">
        <title>The status, quality, and expansion of the NIH full-length cDNA project: the Mammalian Gene Collection (MGC).</title>
        <authorList>
            <consortium name="The MGC Project Team"/>
        </authorList>
    </citation>
    <scope>NUCLEOTIDE SEQUENCE [LARGE SCALE MRNA]</scope>
    <source>
        <tissue>Liver</tissue>
    </source>
</reference>
<protein>
    <recommendedName>
        <fullName>Nesprin-4</fullName>
    </recommendedName>
    <alternativeName>
        <fullName>KASH domain-containing protein 4</fullName>
        <shortName>KASH4</shortName>
    </alternativeName>
    <alternativeName>
        <fullName>Nuclear envelope spectrin repeat protein 4</fullName>
    </alternativeName>
</protein>
<evidence type="ECO:0000250" key="1"/>
<evidence type="ECO:0000250" key="2">
    <source>
        <dbReference type="UniProtKB" id="Q8WXH0"/>
    </source>
</evidence>
<evidence type="ECO:0000255" key="3">
    <source>
        <dbReference type="PROSITE-ProRule" id="PRU00385"/>
    </source>
</evidence>
<evidence type="ECO:0000256" key="4">
    <source>
        <dbReference type="SAM" id="MobiDB-lite"/>
    </source>
</evidence>
<evidence type="ECO:0000305" key="5"/>